<feature type="chain" id="PRO_0000169917" description="Galactose-1-phosphate uridylyltransferase 2">
    <location>
        <begin position="1"/>
        <end position="493"/>
    </location>
</feature>
<gene>
    <name type="primary">galT2</name>
    <name type="ordered locus">spr1667</name>
</gene>
<evidence type="ECO:0000305" key="1"/>
<keyword id="KW-0119">Carbohydrate metabolism</keyword>
<keyword id="KW-0963">Cytoplasm</keyword>
<keyword id="KW-0299">Galactose metabolism</keyword>
<keyword id="KW-0548">Nucleotidyltransferase</keyword>
<keyword id="KW-1185">Reference proteome</keyword>
<keyword id="KW-0808">Transferase</keyword>
<name>GALT2_STRR6</name>
<sequence length="493" mass="56252">MTLVDKFVTHVISESSFEEMDRIYLTNRVLSRVGEGVLEVETNLDKLIDLKDQLVEETVRLETIEDSQTAREILGTELMDLVTPCPSQVNRDFWEAYAYSPEQAIEDFYQLSQKNDYIKLKAIAKNIAYRVPSDYGELEITINLSKPEKDPKEIAVAKLVQASNYPQCQLCLENEGYHGRVNHPARSNHRIIRFEMVGQEWGFQYSPYAYFNEHCIFLDGQHRPMAISRQSFERLLAIVEQFPGYFAGSNADLPIVGGSILTHDHYQGGRHVFPMELAPLQKTFRFAGFEQVKAGIIKWPMSVLRLTSDSKEDLINLADKIFQEWRQYSDSSVQILAETDGTPHHTITPIARKRDGQFELDLVLRDNQTSAEHPDGIYHPHKDVQHIKKENIGLIEVMGLAILPPRLKEEVEQVASYLVGEAVTVADYHQEWADQLKSQHPDLTDKEKALAIVKDSVGAIFVRVLEDAGVYKQTEQGQTAFMRFVEQVGILLD</sequence>
<comment type="catalytic activity">
    <reaction>
        <text>alpha-D-galactose 1-phosphate + UDP-alpha-D-glucose = alpha-D-glucose 1-phosphate + UDP-alpha-D-galactose</text>
        <dbReference type="Rhea" id="RHEA:13989"/>
        <dbReference type="ChEBI" id="CHEBI:58336"/>
        <dbReference type="ChEBI" id="CHEBI:58601"/>
        <dbReference type="ChEBI" id="CHEBI:58885"/>
        <dbReference type="ChEBI" id="CHEBI:66914"/>
        <dbReference type="EC" id="2.7.7.12"/>
    </reaction>
</comment>
<comment type="pathway">
    <text>Carbohydrate metabolism; galactose metabolism.</text>
</comment>
<comment type="subcellular location">
    <subcellularLocation>
        <location evidence="1">Cytoplasm</location>
    </subcellularLocation>
</comment>
<comment type="similarity">
    <text evidence="1">Belongs to the galactose-1-phosphate uridylyltransferase type 2 family.</text>
</comment>
<protein>
    <recommendedName>
        <fullName>Galactose-1-phosphate uridylyltransferase 2</fullName>
        <shortName>Gal-1-P uridylyltransferase 2</shortName>
        <ecNumber>2.7.7.12</ecNumber>
    </recommendedName>
    <alternativeName>
        <fullName>UDP-glucose--hexose-1-phosphate uridylyltransferase 2</fullName>
    </alternativeName>
</protein>
<organism>
    <name type="scientific">Streptococcus pneumoniae (strain ATCC BAA-255 / R6)</name>
    <dbReference type="NCBI Taxonomy" id="171101"/>
    <lineage>
        <taxon>Bacteria</taxon>
        <taxon>Bacillati</taxon>
        <taxon>Bacillota</taxon>
        <taxon>Bacilli</taxon>
        <taxon>Lactobacillales</taxon>
        <taxon>Streptococcaceae</taxon>
        <taxon>Streptococcus</taxon>
    </lineage>
</organism>
<proteinExistence type="inferred from homology"/>
<accession>Q8DNK8</accession>
<dbReference type="EC" id="2.7.7.12"/>
<dbReference type="EMBL" id="AE007317">
    <property type="protein sequence ID" value="AAL00470.1"/>
    <property type="molecule type" value="Genomic_DNA"/>
</dbReference>
<dbReference type="PIR" id="A98080">
    <property type="entry name" value="A98080"/>
</dbReference>
<dbReference type="RefSeq" id="NP_359259.1">
    <property type="nucleotide sequence ID" value="NC_003098.1"/>
</dbReference>
<dbReference type="RefSeq" id="WP_000177009.1">
    <property type="nucleotide sequence ID" value="NC_003098.1"/>
</dbReference>
<dbReference type="STRING" id="171101.spr1667"/>
<dbReference type="KEGG" id="spr:spr1667"/>
<dbReference type="PATRIC" id="fig|171101.6.peg.1801"/>
<dbReference type="eggNOG" id="COG4468">
    <property type="taxonomic scope" value="Bacteria"/>
</dbReference>
<dbReference type="HOGENOM" id="CLU_047799_0_0_9"/>
<dbReference type="UniPathway" id="UPA00214"/>
<dbReference type="Proteomes" id="UP000000586">
    <property type="component" value="Chromosome"/>
</dbReference>
<dbReference type="GO" id="GO:0005737">
    <property type="term" value="C:cytoplasm"/>
    <property type="evidence" value="ECO:0007669"/>
    <property type="project" value="UniProtKB-SubCell"/>
</dbReference>
<dbReference type="GO" id="GO:0008108">
    <property type="term" value="F:UDP-glucose:hexose-1-phosphate uridylyltransferase activity"/>
    <property type="evidence" value="ECO:0007669"/>
    <property type="project" value="UniProtKB-UniRule"/>
</dbReference>
<dbReference type="GO" id="GO:0006012">
    <property type="term" value="P:galactose metabolic process"/>
    <property type="evidence" value="ECO:0007669"/>
    <property type="project" value="UniProtKB-UniRule"/>
</dbReference>
<dbReference type="HAMAP" id="MF_00571">
    <property type="entry name" value="GalP_UDP_trans"/>
    <property type="match status" value="1"/>
</dbReference>
<dbReference type="InterPro" id="IPR000766">
    <property type="entry name" value="GalP_uridyl_Trfase_II"/>
</dbReference>
<dbReference type="InterPro" id="IPR023425">
    <property type="entry name" value="GalP_uridyl_Trfase_II_CS"/>
</dbReference>
<dbReference type="InterPro" id="IPR005850">
    <property type="entry name" value="GalP_Utransf_C"/>
</dbReference>
<dbReference type="InterPro" id="IPR005849">
    <property type="entry name" value="GalP_Utransf_N"/>
</dbReference>
<dbReference type="NCBIfam" id="TIGR01239">
    <property type="entry name" value="galT_2"/>
    <property type="match status" value="1"/>
</dbReference>
<dbReference type="NCBIfam" id="NF003628">
    <property type="entry name" value="PRK05270.1-1"/>
    <property type="match status" value="1"/>
</dbReference>
<dbReference type="NCBIfam" id="NF003629">
    <property type="entry name" value="PRK05270.1-2"/>
    <property type="match status" value="1"/>
</dbReference>
<dbReference type="NCBIfam" id="NF003631">
    <property type="entry name" value="PRK05270.1-5"/>
    <property type="match status" value="1"/>
</dbReference>
<dbReference type="NCBIfam" id="NF003633">
    <property type="entry name" value="PRK05270.2-2"/>
    <property type="match status" value="1"/>
</dbReference>
<dbReference type="PANTHER" id="PTHR39191:SF1">
    <property type="entry name" value="DUF4922 DOMAIN-CONTAINING PROTEIN"/>
    <property type="match status" value="1"/>
</dbReference>
<dbReference type="PANTHER" id="PTHR39191">
    <property type="entry name" value="GALACTOSE-1-PHOSPHATE URIDYLYLTRANSFERASE"/>
    <property type="match status" value="1"/>
</dbReference>
<dbReference type="Pfam" id="PF02744">
    <property type="entry name" value="GalP_UDP_tr_C"/>
    <property type="match status" value="1"/>
</dbReference>
<dbReference type="Pfam" id="PF01087">
    <property type="entry name" value="GalP_UDP_transf"/>
    <property type="match status" value="1"/>
</dbReference>
<dbReference type="PIRSF" id="PIRSF006005">
    <property type="entry name" value="GalT_BS"/>
    <property type="match status" value="1"/>
</dbReference>
<dbReference type="PROSITE" id="PS01163">
    <property type="entry name" value="GAL_P_UDP_TRANSF_II"/>
    <property type="match status" value="1"/>
</dbReference>
<reference key="1">
    <citation type="journal article" date="2001" name="J. Bacteriol.">
        <title>Genome of the bacterium Streptococcus pneumoniae strain R6.</title>
        <authorList>
            <person name="Hoskins J."/>
            <person name="Alborn W.E. Jr."/>
            <person name="Arnold J."/>
            <person name="Blaszczak L.C."/>
            <person name="Burgett S."/>
            <person name="DeHoff B.S."/>
            <person name="Estrem S.T."/>
            <person name="Fritz L."/>
            <person name="Fu D.-J."/>
            <person name="Fuller W."/>
            <person name="Geringer C."/>
            <person name="Gilmour R."/>
            <person name="Glass J.S."/>
            <person name="Khoja H."/>
            <person name="Kraft A.R."/>
            <person name="Lagace R.E."/>
            <person name="LeBlanc D.J."/>
            <person name="Lee L.N."/>
            <person name="Lefkowitz E.J."/>
            <person name="Lu J."/>
            <person name="Matsushima P."/>
            <person name="McAhren S.M."/>
            <person name="McHenney M."/>
            <person name="McLeaster K."/>
            <person name="Mundy C.W."/>
            <person name="Nicas T.I."/>
            <person name="Norris F.H."/>
            <person name="O'Gara M."/>
            <person name="Peery R.B."/>
            <person name="Robertson G.T."/>
            <person name="Rockey P."/>
            <person name="Sun P.-M."/>
            <person name="Winkler M.E."/>
            <person name="Yang Y."/>
            <person name="Young-Bellido M."/>
            <person name="Zhao G."/>
            <person name="Zook C.A."/>
            <person name="Baltz R.H."/>
            <person name="Jaskunas S.R."/>
            <person name="Rosteck P.R. Jr."/>
            <person name="Skatrud P.L."/>
            <person name="Glass J.I."/>
        </authorList>
    </citation>
    <scope>NUCLEOTIDE SEQUENCE [LARGE SCALE GENOMIC DNA]</scope>
    <source>
        <strain>ATCC BAA-255 / R6</strain>
    </source>
</reference>